<organism>
    <name type="scientific">Corynebacterium glutamicum (strain ATCC 13032 / DSM 20300 / JCM 1318 / BCRC 11384 / CCUG 27702 / LMG 3730 / NBRC 12168 / NCIMB 10025 / NRRL B-2784 / 534)</name>
    <dbReference type="NCBI Taxonomy" id="196627"/>
    <lineage>
        <taxon>Bacteria</taxon>
        <taxon>Bacillati</taxon>
        <taxon>Actinomycetota</taxon>
        <taxon>Actinomycetes</taxon>
        <taxon>Mycobacteriales</taxon>
        <taxon>Corynebacteriaceae</taxon>
        <taxon>Corynebacterium</taxon>
    </lineage>
</organism>
<evidence type="ECO:0000255" key="1">
    <source>
        <dbReference type="PROSITE-ProRule" id="PRU00815"/>
    </source>
</evidence>
<evidence type="ECO:0000269" key="2">
    <source ref="3"/>
</evidence>
<evidence type="ECO:0000305" key="3">
    <source ref="3"/>
</evidence>
<evidence type="ECO:0007744" key="4">
    <source>
        <dbReference type="PDB" id="3EGL"/>
    </source>
</evidence>
<evidence type="ECO:0007829" key="5">
    <source>
        <dbReference type="PDB" id="3EGL"/>
    </source>
</evidence>
<comment type="function">
    <text evidence="2">Binds long-chain fatty acids, such as palmitate, and may play a role in lipid transport or fatty acid metabolism.</text>
</comment>
<comment type="subunit">
    <text evidence="3">Monomer.</text>
</comment>
<sequence>MPVRVIVDSSACLPTHVAEDLDITVINLHVMNNGEERSTSGLSSLELAASYARQLERGGDDGVLALHISKELSSTWSAAVTAAAVFDDDSVRVVDTSSLGMAVGAAAMAAARMAKDGASLQECYDIAVDTLKRSETWIYLHRIDEIWKSGRISTATAMVSTALATRPIMRFNGGRMEIAAKTRTQSKAFAKLVELAQIRADGEPVFIAIGQNEAREAAKQLEELLRNALPEGSSFMSVDIDPTLAVHSGPGAVSVSAVFANQAPELSTGKAGAK</sequence>
<protein>
    <recommendedName>
        <fullName>DegV domain-containing protein Cgl2349/cg2579</fullName>
    </recommendedName>
</protein>
<name>Y2349_CORGL</name>
<gene>
    <name type="ordered locus">Cgl2349</name>
    <name type="ordered locus">cg2579</name>
</gene>
<keyword id="KW-0002">3D-structure</keyword>
<keyword id="KW-0446">Lipid-binding</keyword>
<keyword id="KW-1185">Reference proteome</keyword>
<proteinExistence type="evidence at protein level"/>
<feature type="chain" id="PRO_0000209761" description="DegV domain-containing protein Cgl2349/cg2579">
    <location>
        <begin position="1"/>
        <end position="274"/>
    </location>
</feature>
<feature type="domain" description="DegV" evidence="1">
    <location>
        <begin position="3"/>
        <end position="259"/>
    </location>
</feature>
<feature type="binding site" evidence="4">
    <location>
        <position position="39"/>
    </location>
    <ligand>
        <name>hexadecanoate</name>
        <dbReference type="ChEBI" id="CHEBI:7896"/>
    </ligand>
</feature>
<feature type="binding site" evidence="4">
    <location>
        <position position="73"/>
    </location>
    <ligand>
        <name>hexadecanoate</name>
        <dbReference type="ChEBI" id="CHEBI:7896"/>
    </ligand>
</feature>
<feature type="strand" evidence="5">
    <location>
        <begin position="4"/>
        <end position="8"/>
    </location>
</feature>
<feature type="helix" evidence="5">
    <location>
        <begin position="9"/>
        <end position="11"/>
    </location>
</feature>
<feature type="helix" evidence="5">
    <location>
        <begin position="15"/>
        <end position="20"/>
    </location>
</feature>
<feature type="strand" evidence="5">
    <location>
        <begin position="23"/>
        <end position="26"/>
    </location>
</feature>
<feature type="strand" evidence="5">
    <location>
        <begin position="29"/>
        <end position="32"/>
    </location>
</feature>
<feature type="strand" evidence="5">
    <location>
        <begin position="37"/>
        <end position="40"/>
    </location>
</feature>
<feature type="helix" evidence="5">
    <location>
        <begin position="44"/>
        <end position="57"/>
    </location>
</feature>
<feature type="turn" evidence="5">
    <location>
        <begin position="58"/>
        <end position="60"/>
    </location>
</feature>
<feature type="strand" evidence="5">
    <location>
        <begin position="63"/>
        <end position="66"/>
    </location>
</feature>
<feature type="helix" evidence="5">
    <location>
        <begin position="75"/>
        <end position="83"/>
    </location>
</feature>
<feature type="strand" evidence="5">
    <location>
        <begin position="90"/>
        <end position="94"/>
    </location>
</feature>
<feature type="helix" evidence="5">
    <location>
        <begin position="101"/>
        <end position="114"/>
    </location>
</feature>
<feature type="helix" evidence="5">
    <location>
        <begin position="120"/>
        <end position="131"/>
    </location>
</feature>
<feature type="strand" evidence="5">
    <location>
        <begin position="134"/>
        <end position="139"/>
    </location>
</feature>
<feature type="helix" evidence="5">
    <location>
        <begin position="144"/>
        <end position="147"/>
    </location>
</feature>
<feature type="turn" evidence="5">
    <location>
        <begin position="154"/>
        <end position="156"/>
    </location>
</feature>
<feature type="helix" evidence="5">
    <location>
        <begin position="160"/>
        <end position="163"/>
    </location>
</feature>
<feature type="strand" evidence="5">
    <location>
        <begin position="168"/>
        <end position="172"/>
    </location>
</feature>
<feature type="strand" evidence="5">
    <location>
        <begin position="175"/>
        <end position="180"/>
    </location>
</feature>
<feature type="helix" evidence="5">
    <location>
        <begin position="193"/>
        <end position="200"/>
    </location>
</feature>
<feature type="strand" evidence="5">
    <location>
        <begin position="206"/>
        <end position="213"/>
    </location>
</feature>
<feature type="helix" evidence="5">
    <location>
        <begin position="215"/>
        <end position="218"/>
    </location>
</feature>
<feature type="helix" evidence="5">
    <location>
        <begin position="221"/>
        <end position="228"/>
    </location>
</feature>
<feature type="strand" evidence="5">
    <location>
        <begin position="234"/>
        <end position="239"/>
    </location>
</feature>
<feature type="helix" evidence="5">
    <location>
        <begin position="242"/>
        <end position="248"/>
    </location>
</feature>
<feature type="strand" evidence="5">
    <location>
        <begin position="252"/>
        <end position="258"/>
    </location>
</feature>
<reference key="1">
    <citation type="journal article" date="2003" name="Appl. Microbiol. Biotechnol.">
        <title>The Corynebacterium glutamicum genome: features and impacts on biotechnological processes.</title>
        <authorList>
            <person name="Ikeda M."/>
            <person name="Nakagawa S."/>
        </authorList>
    </citation>
    <scope>NUCLEOTIDE SEQUENCE [LARGE SCALE GENOMIC DNA]</scope>
    <source>
        <strain>ATCC 13032 / DSM 20300 / JCM 1318 / BCRC 11384 / CCUG 27702 / LMG 3730 / NBRC 12168 / NCIMB 10025 / NRRL B-2784 / 534</strain>
    </source>
</reference>
<reference key="2">
    <citation type="journal article" date="2003" name="J. Biotechnol.">
        <title>The complete Corynebacterium glutamicum ATCC 13032 genome sequence and its impact on the production of L-aspartate-derived amino acids and vitamins.</title>
        <authorList>
            <person name="Kalinowski J."/>
            <person name="Bathe B."/>
            <person name="Bartels D."/>
            <person name="Bischoff N."/>
            <person name="Bott M."/>
            <person name="Burkovski A."/>
            <person name="Dusch N."/>
            <person name="Eggeling L."/>
            <person name="Eikmanns B.J."/>
            <person name="Gaigalat L."/>
            <person name="Goesmann A."/>
            <person name="Hartmann M."/>
            <person name="Huthmacher K."/>
            <person name="Kraemer R."/>
            <person name="Linke B."/>
            <person name="McHardy A.C."/>
            <person name="Meyer F."/>
            <person name="Moeckel B."/>
            <person name="Pfefferle W."/>
            <person name="Puehler A."/>
            <person name="Rey D.A."/>
            <person name="Rueckert C."/>
            <person name="Rupp O."/>
            <person name="Sahm H."/>
            <person name="Wendisch V.F."/>
            <person name="Wiegraebe I."/>
            <person name="Tauch A."/>
        </authorList>
    </citation>
    <scope>NUCLEOTIDE SEQUENCE [LARGE SCALE GENOMIC DNA]</scope>
    <source>
        <strain>ATCC 13032 / DSM 20300 / JCM 1318 / BCRC 11384 / CCUG 27702 / LMG 3730 / NBRC 12168 / NCIMB 10025 / NRRL B-2784 / 534</strain>
    </source>
</reference>
<reference evidence="4" key="3">
    <citation type="submission" date="2008-09" db="PDB data bank">
        <title>Crystal structure of DegV family protein Cg2579 from Corynebacterium glutamicum.</title>
        <authorList>
            <consortium name="Midwest center for structural genomics (MCSG)"/>
        </authorList>
    </citation>
    <scope>X-RAY CRYSTALLOGRAPHY (2.41 ANGSTROMS) IN COMPLEX WITH PALMITATE</scope>
    <scope>FUNCTION</scope>
    <scope>SUBUNIT</scope>
</reference>
<accession>Q8NN60</accession>
<dbReference type="EMBL" id="BA000036">
    <property type="protein sequence ID" value="BAB99742.1"/>
    <property type="molecule type" value="Genomic_DNA"/>
</dbReference>
<dbReference type="EMBL" id="BX927155">
    <property type="protein sequence ID" value="CAF21014.1"/>
    <property type="molecule type" value="Genomic_DNA"/>
</dbReference>
<dbReference type="RefSeq" id="NP_601550.1">
    <property type="nucleotide sequence ID" value="NC_003450.3"/>
</dbReference>
<dbReference type="RefSeq" id="WP_011015060.1">
    <property type="nucleotide sequence ID" value="NC_006958.1"/>
</dbReference>
<dbReference type="PDB" id="3EGL">
    <property type="method" value="X-ray"/>
    <property type="resolution" value="2.41 A"/>
    <property type="chains" value="A/B/C=1-274"/>
</dbReference>
<dbReference type="PDBsum" id="3EGL"/>
<dbReference type="SMR" id="Q8NN60"/>
<dbReference type="STRING" id="196627.cg2579"/>
<dbReference type="KEGG" id="cgb:cg2579"/>
<dbReference type="KEGG" id="cgl:Cgl2349"/>
<dbReference type="PATRIC" id="fig|196627.13.peg.2285"/>
<dbReference type="eggNOG" id="COG1307">
    <property type="taxonomic scope" value="Bacteria"/>
</dbReference>
<dbReference type="HOGENOM" id="CLU_048251_0_0_11"/>
<dbReference type="OrthoDB" id="9760324at2"/>
<dbReference type="BioCyc" id="CORYNE:G18NG-11946-MONOMER"/>
<dbReference type="EvolutionaryTrace" id="Q8NN60"/>
<dbReference type="Proteomes" id="UP000000582">
    <property type="component" value="Chromosome"/>
</dbReference>
<dbReference type="Proteomes" id="UP000001009">
    <property type="component" value="Chromosome"/>
</dbReference>
<dbReference type="GO" id="GO:0008289">
    <property type="term" value="F:lipid binding"/>
    <property type="evidence" value="ECO:0007669"/>
    <property type="project" value="UniProtKB-KW"/>
</dbReference>
<dbReference type="Gene3D" id="3.30.1180.10">
    <property type="match status" value="1"/>
</dbReference>
<dbReference type="Gene3D" id="3.40.50.10170">
    <property type="match status" value="1"/>
</dbReference>
<dbReference type="InterPro" id="IPR003797">
    <property type="entry name" value="DegV"/>
</dbReference>
<dbReference type="InterPro" id="IPR043168">
    <property type="entry name" value="DegV_C"/>
</dbReference>
<dbReference type="InterPro" id="IPR050270">
    <property type="entry name" value="DegV_domain_contain"/>
</dbReference>
<dbReference type="NCBIfam" id="TIGR00762">
    <property type="entry name" value="DegV"/>
    <property type="match status" value="1"/>
</dbReference>
<dbReference type="PANTHER" id="PTHR33434">
    <property type="entry name" value="DEGV DOMAIN-CONTAINING PROTEIN DR_1986-RELATED"/>
    <property type="match status" value="1"/>
</dbReference>
<dbReference type="PANTHER" id="PTHR33434:SF2">
    <property type="entry name" value="FATTY ACID-BINDING PROTEIN TM_1468"/>
    <property type="match status" value="1"/>
</dbReference>
<dbReference type="Pfam" id="PF02645">
    <property type="entry name" value="DegV"/>
    <property type="match status" value="1"/>
</dbReference>
<dbReference type="SUPFAM" id="SSF82549">
    <property type="entry name" value="DAK1/DegV-like"/>
    <property type="match status" value="1"/>
</dbReference>
<dbReference type="PROSITE" id="PS51482">
    <property type="entry name" value="DEGV"/>
    <property type="match status" value="1"/>
</dbReference>